<name>ENO_SHEWM</name>
<reference key="1">
    <citation type="submission" date="2008-02" db="EMBL/GenBank/DDBJ databases">
        <title>Complete sequence of Shewanella woodyi ATCC 51908.</title>
        <authorList>
            <consortium name="US DOE Joint Genome Institute"/>
            <person name="Copeland A."/>
            <person name="Lucas S."/>
            <person name="Lapidus A."/>
            <person name="Glavina del Rio T."/>
            <person name="Dalin E."/>
            <person name="Tice H."/>
            <person name="Bruce D."/>
            <person name="Goodwin L."/>
            <person name="Pitluck S."/>
            <person name="Sims D."/>
            <person name="Brettin T."/>
            <person name="Detter J.C."/>
            <person name="Han C."/>
            <person name="Kuske C.R."/>
            <person name="Schmutz J."/>
            <person name="Larimer F."/>
            <person name="Land M."/>
            <person name="Hauser L."/>
            <person name="Kyrpides N."/>
            <person name="Lykidis A."/>
            <person name="Zhao J.-S."/>
            <person name="Richardson P."/>
        </authorList>
    </citation>
    <scope>NUCLEOTIDE SEQUENCE [LARGE SCALE GENOMIC DNA]</scope>
    <source>
        <strain>ATCC 51908 / MS32</strain>
    </source>
</reference>
<organism>
    <name type="scientific">Shewanella woodyi (strain ATCC 51908 / MS32)</name>
    <dbReference type="NCBI Taxonomy" id="392500"/>
    <lineage>
        <taxon>Bacteria</taxon>
        <taxon>Pseudomonadati</taxon>
        <taxon>Pseudomonadota</taxon>
        <taxon>Gammaproteobacteria</taxon>
        <taxon>Alteromonadales</taxon>
        <taxon>Shewanellaceae</taxon>
        <taxon>Shewanella</taxon>
    </lineage>
</organism>
<protein>
    <recommendedName>
        <fullName evidence="1">Enolase</fullName>
        <ecNumber evidence="1">4.2.1.11</ecNumber>
    </recommendedName>
    <alternativeName>
        <fullName evidence="1">2-phospho-D-glycerate hydro-lyase</fullName>
    </alternativeName>
    <alternativeName>
        <fullName evidence="1">2-phosphoglycerate dehydratase</fullName>
    </alternativeName>
</protein>
<keyword id="KW-0963">Cytoplasm</keyword>
<keyword id="KW-0324">Glycolysis</keyword>
<keyword id="KW-0456">Lyase</keyword>
<keyword id="KW-0460">Magnesium</keyword>
<keyword id="KW-0479">Metal-binding</keyword>
<keyword id="KW-1185">Reference proteome</keyword>
<keyword id="KW-0964">Secreted</keyword>
<evidence type="ECO:0000255" key="1">
    <source>
        <dbReference type="HAMAP-Rule" id="MF_00318"/>
    </source>
</evidence>
<comment type="function">
    <text evidence="1">Catalyzes the reversible conversion of 2-phosphoglycerate (2-PG) into phosphoenolpyruvate (PEP). It is essential for the degradation of carbohydrates via glycolysis.</text>
</comment>
<comment type="catalytic activity">
    <reaction evidence="1">
        <text>(2R)-2-phosphoglycerate = phosphoenolpyruvate + H2O</text>
        <dbReference type="Rhea" id="RHEA:10164"/>
        <dbReference type="ChEBI" id="CHEBI:15377"/>
        <dbReference type="ChEBI" id="CHEBI:58289"/>
        <dbReference type="ChEBI" id="CHEBI:58702"/>
        <dbReference type="EC" id="4.2.1.11"/>
    </reaction>
</comment>
<comment type="cofactor">
    <cofactor evidence="1">
        <name>Mg(2+)</name>
        <dbReference type="ChEBI" id="CHEBI:18420"/>
    </cofactor>
    <text evidence="1">Binds a second Mg(2+) ion via substrate during catalysis.</text>
</comment>
<comment type="pathway">
    <text evidence="1">Carbohydrate degradation; glycolysis; pyruvate from D-glyceraldehyde 3-phosphate: step 4/5.</text>
</comment>
<comment type="subunit">
    <text evidence="1">Component of the RNA degradosome, a multiprotein complex involved in RNA processing and mRNA degradation.</text>
</comment>
<comment type="subcellular location">
    <subcellularLocation>
        <location evidence="1">Cytoplasm</location>
    </subcellularLocation>
    <subcellularLocation>
        <location evidence="1">Secreted</location>
    </subcellularLocation>
    <subcellularLocation>
        <location evidence="1">Cell surface</location>
    </subcellularLocation>
    <text evidence="1">Fractions of enolase are present in both the cytoplasm and on the cell surface.</text>
</comment>
<comment type="similarity">
    <text evidence="1">Belongs to the enolase family.</text>
</comment>
<proteinExistence type="inferred from homology"/>
<gene>
    <name evidence="1" type="primary">eno</name>
    <name type="ordered locus">Swoo_3350</name>
</gene>
<dbReference type="EC" id="4.2.1.11" evidence="1"/>
<dbReference type="EMBL" id="CP000961">
    <property type="protein sequence ID" value="ACA87619.1"/>
    <property type="molecule type" value="Genomic_DNA"/>
</dbReference>
<dbReference type="RefSeq" id="WP_012325954.1">
    <property type="nucleotide sequence ID" value="NC_010506.1"/>
</dbReference>
<dbReference type="SMR" id="B1KPT6"/>
<dbReference type="STRING" id="392500.Swoo_3350"/>
<dbReference type="KEGG" id="swd:Swoo_3350"/>
<dbReference type="eggNOG" id="COG0148">
    <property type="taxonomic scope" value="Bacteria"/>
</dbReference>
<dbReference type="HOGENOM" id="CLU_031223_2_1_6"/>
<dbReference type="UniPathway" id="UPA00109">
    <property type="reaction ID" value="UER00187"/>
</dbReference>
<dbReference type="Proteomes" id="UP000002168">
    <property type="component" value="Chromosome"/>
</dbReference>
<dbReference type="GO" id="GO:0009986">
    <property type="term" value="C:cell surface"/>
    <property type="evidence" value="ECO:0007669"/>
    <property type="project" value="UniProtKB-SubCell"/>
</dbReference>
<dbReference type="GO" id="GO:0005576">
    <property type="term" value="C:extracellular region"/>
    <property type="evidence" value="ECO:0007669"/>
    <property type="project" value="UniProtKB-SubCell"/>
</dbReference>
<dbReference type="GO" id="GO:0000015">
    <property type="term" value="C:phosphopyruvate hydratase complex"/>
    <property type="evidence" value="ECO:0007669"/>
    <property type="project" value="InterPro"/>
</dbReference>
<dbReference type="GO" id="GO:0000287">
    <property type="term" value="F:magnesium ion binding"/>
    <property type="evidence" value="ECO:0007669"/>
    <property type="project" value="UniProtKB-UniRule"/>
</dbReference>
<dbReference type="GO" id="GO:0004634">
    <property type="term" value="F:phosphopyruvate hydratase activity"/>
    <property type="evidence" value="ECO:0007669"/>
    <property type="project" value="UniProtKB-UniRule"/>
</dbReference>
<dbReference type="GO" id="GO:0006096">
    <property type="term" value="P:glycolytic process"/>
    <property type="evidence" value="ECO:0007669"/>
    <property type="project" value="UniProtKB-UniRule"/>
</dbReference>
<dbReference type="CDD" id="cd03313">
    <property type="entry name" value="enolase"/>
    <property type="match status" value="1"/>
</dbReference>
<dbReference type="FunFam" id="3.20.20.120:FF:000001">
    <property type="entry name" value="Enolase"/>
    <property type="match status" value="1"/>
</dbReference>
<dbReference type="FunFam" id="3.30.390.10:FF:000001">
    <property type="entry name" value="Enolase"/>
    <property type="match status" value="1"/>
</dbReference>
<dbReference type="Gene3D" id="3.20.20.120">
    <property type="entry name" value="Enolase-like C-terminal domain"/>
    <property type="match status" value="1"/>
</dbReference>
<dbReference type="Gene3D" id="3.30.390.10">
    <property type="entry name" value="Enolase-like, N-terminal domain"/>
    <property type="match status" value="1"/>
</dbReference>
<dbReference type="HAMAP" id="MF_00318">
    <property type="entry name" value="Enolase"/>
    <property type="match status" value="1"/>
</dbReference>
<dbReference type="InterPro" id="IPR000941">
    <property type="entry name" value="Enolase"/>
</dbReference>
<dbReference type="InterPro" id="IPR036849">
    <property type="entry name" value="Enolase-like_C_sf"/>
</dbReference>
<dbReference type="InterPro" id="IPR029017">
    <property type="entry name" value="Enolase-like_N"/>
</dbReference>
<dbReference type="InterPro" id="IPR020810">
    <property type="entry name" value="Enolase_C"/>
</dbReference>
<dbReference type="InterPro" id="IPR020809">
    <property type="entry name" value="Enolase_CS"/>
</dbReference>
<dbReference type="InterPro" id="IPR020811">
    <property type="entry name" value="Enolase_N"/>
</dbReference>
<dbReference type="NCBIfam" id="TIGR01060">
    <property type="entry name" value="eno"/>
    <property type="match status" value="1"/>
</dbReference>
<dbReference type="PANTHER" id="PTHR11902">
    <property type="entry name" value="ENOLASE"/>
    <property type="match status" value="1"/>
</dbReference>
<dbReference type="PANTHER" id="PTHR11902:SF1">
    <property type="entry name" value="ENOLASE"/>
    <property type="match status" value="1"/>
</dbReference>
<dbReference type="Pfam" id="PF00113">
    <property type="entry name" value="Enolase_C"/>
    <property type="match status" value="1"/>
</dbReference>
<dbReference type="Pfam" id="PF03952">
    <property type="entry name" value="Enolase_N"/>
    <property type="match status" value="1"/>
</dbReference>
<dbReference type="PIRSF" id="PIRSF001400">
    <property type="entry name" value="Enolase"/>
    <property type="match status" value="1"/>
</dbReference>
<dbReference type="PRINTS" id="PR00148">
    <property type="entry name" value="ENOLASE"/>
</dbReference>
<dbReference type="SFLD" id="SFLDS00001">
    <property type="entry name" value="Enolase"/>
    <property type="match status" value="1"/>
</dbReference>
<dbReference type="SFLD" id="SFLDF00002">
    <property type="entry name" value="enolase"/>
    <property type="match status" value="1"/>
</dbReference>
<dbReference type="SMART" id="SM01192">
    <property type="entry name" value="Enolase_C"/>
    <property type="match status" value="1"/>
</dbReference>
<dbReference type="SMART" id="SM01193">
    <property type="entry name" value="Enolase_N"/>
    <property type="match status" value="1"/>
</dbReference>
<dbReference type="SUPFAM" id="SSF51604">
    <property type="entry name" value="Enolase C-terminal domain-like"/>
    <property type="match status" value="1"/>
</dbReference>
<dbReference type="SUPFAM" id="SSF54826">
    <property type="entry name" value="Enolase N-terminal domain-like"/>
    <property type="match status" value="1"/>
</dbReference>
<dbReference type="PROSITE" id="PS00164">
    <property type="entry name" value="ENOLASE"/>
    <property type="match status" value="1"/>
</dbReference>
<feature type="chain" id="PRO_1000115914" description="Enolase">
    <location>
        <begin position="1"/>
        <end position="431"/>
    </location>
</feature>
<feature type="active site" description="Proton donor" evidence="1">
    <location>
        <position position="209"/>
    </location>
</feature>
<feature type="active site" description="Proton acceptor" evidence="1">
    <location>
        <position position="341"/>
    </location>
</feature>
<feature type="binding site" evidence="1">
    <location>
        <position position="167"/>
    </location>
    <ligand>
        <name>(2R)-2-phosphoglycerate</name>
        <dbReference type="ChEBI" id="CHEBI:58289"/>
    </ligand>
</feature>
<feature type="binding site" evidence="1">
    <location>
        <position position="246"/>
    </location>
    <ligand>
        <name>Mg(2+)</name>
        <dbReference type="ChEBI" id="CHEBI:18420"/>
    </ligand>
</feature>
<feature type="binding site" evidence="1">
    <location>
        <position position="289"/>
    </location>
    <ligand>
        <name>Mg(2+)</name>
        <dbReference type="ChEBI" id="CHEBI:18420"/>
    </ligand>
</feature>
<feature type="binding site" evidence="1">
    <location>
        <position position="316"/>
    </location>
    <ligand>
        <name>Mg(2+)</name>
        <dbReference type="ChEBI" id="CHEBI:18420"/>
    </ligand>
</feature>
<feature type="binding site" evidence="1">
    <location>
        <position position="341"/>
    </location>
    <ligand>
        <name>(2R)-2-phosphoglycerate</name>
        <dbReference type="ChEBI" id="CHEBI:58289"/>
    </ligand>
</feature>
<feature type="binding site" evidence="1">
    <location>
        <position position="370"/>
    </location>
    <ligand>
        <name>(2R)-2-phosphoglycerate</name>
        <dbReference type="ChEBI" id="CHEBI:58289"/>
    </ligand>
</feature>
<feature type="binding site" evidence="1">
    <location>
        <position position="371"/>
    </location>
    <ligand>
        <name>(2R)-2-phosphoglycerate</name>
        <dbReference type="ChEBI" id="CHEBI:58289"/>
    </ligand>
</feature>
<feature type="binding site" evidence="1">
    <location>
        <position position="392"/>
    </location>
    <ligand>
        <name>(2R)-2-phosphoglycerate</name>
        <dbReference type="ChEBI" id="CHEBI:58289"/>
    </ligand>
</feature>
<sequence length="431" mass="45912">MAKIINVIGREIMDSRGNPTVEAEVHLEGGFNGMAAAPSGASTGSREALELRDGDKARYLGKGVLTAVANINGPIRDALMGKDATAQAELDQLMIDLDGTENKDKLGANAILAVSLAAAKAAAAFKGMPLYAHIAELNGTPGQFSMPVPMMNILNGGEHADNNVDIQEFMVQPVGAKTFREALRVGAEIFHSLKKVLQEKGLSTSVGDEGGFAPNLASNADALAMIKVAVEKAGYKLGEDVTLALDCAASEFYKDGQYDLTGEGKVFSANGFSDFLKSLTEEYPIASIEDGLDESDWEGWAYQTQIMGDKIQLVGDDLFVTNTKILKRGIDNNIANSILIKFNQIGSLTETLAAIRMAKEAGYTVVISHRSGETEDATIADLAVATSAGQIKTGSLCRSDRVAKYNQLLRIEEQLGEKAPYRGRSEIKGQA</sequence>
<accession>B1KPT6</accession>